<dbReference type="EMBL" id="AF401577">
    <property type="protein sequence ID" value="AAK95149.2"/>
    <property type="molecule type" value="mRNA"/>
</dbReference>
<dbReference type="RefSeq" id="NP_001187049.1">
    <property type="nucleotide sequence ID" value="NM_001200120.1"/>
</dbReference>
<dbReference type="SMR" id="Q90YU5"/>
<dbReference type="STRING" id="7998.ENSIPUP00000015653"/>
<dbReference type="GeneID" id="100304537"/>
<dbReference type="KEGG" id="ipu:100304537"/>
<dbReference type="CTD" id="9349"/>
<dbReference type="OMA" id="MIQMQTR"/>
<dbReference type="OrthoDB" id="407959at2759"/>
<dbReference type="Proteomes" id="UP000221080">
    <property type="component" value="Chromosome 2"/>
</dbReference>
<dbReference type="GO" id="GO:0022625">
    <property type="term" value="C:cytosolic large ribosomal subunit"/>
    <property type="evidence" value="ECO:0007669"/>
    <property type="project" value="TreeGrafter"/>
</dbReference>
<dbReference type="GO" id="GO:0070180">
    <property type="term" value="F:large ribosomal subunit rRNA binding"/>
    <property type="evidence" value="ECO:0007669"/>
    <property type="project" value="TreeGrafter"/>
</dbReference>
<dbReference type="GO" id="GO:0003735">
    <property type="term" value="F:structural constituent of ribosome"/>
    <property type="evidence" value="ECO:0007669"/>
    <property type="project" value="InterPro"/>
</dbReference>
<dbReference type="GO" id="GO:0006412">
    <property type="term" value="P:translation"/>
    <property type="evidence" value="ECO:0007669"/>
    <property type="project" value="InterPro"/>
</dbReference>
<dbReference type="CDD" id="cd00337">
    <property type="entry name" value="Ribosomal_uL14"/>
    <property type="match status" value="1"/>
</dbReference>
<dbReference type="FunFam" id="2.40.150.20:FF:000003">
    <property type="entry name" value="60S ribosomal protein L23"/>
    <property type="match status" value="1"/>
</dbReference>
<dbReference type="Gene3D" id="2.40.150.20">
    <property type="entry name" value="Ribosomal protein L14"/>
    <property type="match status" value="1"/>
</dbReference>
<dbReference type="HAMAP" id="MF_01367">
    <property type="entry name" value="Ribosomal_uL14"/>
    <property type="match status" value="1"/>
</dbReference>
<dbReference type="InterPro" id="IPR000218">
    <property type="entry name" value="Ribosomal_uL14"/>
</dbReference>
<dbReference type="InterPro" id="IPR019972">
    <property type="entry name" value="Ribosomal_uL14_CS"/>
</dbReference>
<dbReference type="InterPro" id="IPR036853">
    <property type="entry name" value="Ribosomal_uL14_sf"/>
</dbReference>
<dbReference type="NCBIfam" id="NF006344">
    <property type="entry name" value="PRK08571.1"/>
    <property type="match status" value="1"/>
</dbReference>
<dbReference type="PANTHER" id="PTHR11761">
    <property type="entry name" value="50S/60S RIBOSOMAL PROTEIN L14/L23"/>
    <property type="match status" value="1"/>
</dbReference>
<dbReference type="PANTHER" id="PTHR11761:SF8">
    <property type="entry name" value="LARGE RIBOSOMAL SUBUNIT PROTEIN UL14"/>
    <property type="match status" value="1"/>
</dbReference>
<dbReference type="Pfam" id="PF00238">
    <property type="entry name" value="Ribosomal_L14"/>
    <property type="match status" value="1"/>
</dbReference>
<dbReference type="SMART" id="SM01374">
    <property type="entry name" value="Ribosomal_L14"/>
    <property type="match status" value="1"/>
</dbReference>
<dbReference type="SUPFAM" id="SSF50193">
    <property type="entry name" value="Ribosomal protein L14"/>
    <property type="match status" value="1"/>
</dbReference>
<dbReference type="PROSITE" id="PS00049">
    <property type="entry name" value="RIBOSOMAL_L14"/>
    <property type="match status" value="1"/>
</dbReference>
<protein>
    <recommendedName>
        <fullName evidence="2">Large ribosomal subunit protein uL14</fullName>
    </recommendedName>
    <alternativeName>
        <fullName>60S ribosomal protein L23</fullName>
    </alternativeName>
</protein>
<accession>Q90YU5</accession>
<keyword id="KW-0963">Cytoplasm</keyword>
<keyword id="KW-0687">Ribonucleoprotein</keyword>
<keyword id="KW-0689">Ribosomal protein</keyword>
<organism>
    <name type="scientific">Ictalurus punctatus</name>
    <name type="common">Channel catfish</name>
    <name type="synonym">Silurus punctatus</name>
    <dbReference type="NCBI Taxonomy" id="7998"/>
    <lineage>
        <taxon>Eukaryota</taxon>
        <taxon>Metazoa</taxon>
        <taxon>Chordata</taxon>
        <taxon>Craniata</taxon>
        <taxon>Vertebrata</taxon>
        <taxon>Euteleostomi</taxon>
        <taxon>Actinopterygii</taxon>
        <taxon>Neopterygii</taxon>
        <taxon>Teleostei</taxon>
        <taxon>Ostariophysi</taxon>
        <taxon>Siluriformes</taxon>
        <taxon>Ictaluridae</taxon>
        <taxon>Ictalurus</taxon>
    </lineage>
</organism>
<gene>
    <name type="primary">rpl23</name>
</gene>
<reference key="1">
    <citation type="journal article" date="2003" name="Gene">
        <title>Translational machinery of channel catfish: II. Complementary DNA and expression of the complete set of 47 60S ribosomal proteins.</title>
        <authorList>
            <person name="Patterson A.P."/>
            <person name="Karsi A."/>
            <person name="Feng J."/>
            <person name="Liu Z.J."/>
        </authorList>
    </citation>
    <scope>NUCLEOTIDE SEQUENCE [MRNA]</scope>
</reference>
<evidence type="ECO:0000250" key="1">
    <source>
        <dbReference type="UniProtKB" id="P62829"/>
    </source>
</evidence>
<evidence type="ECO:0000305" key="2"/>
<feature type="chain" id="PRO_0000128618" description="Large ribosomal subunit protein uL14">
    <location>
        <begin position="1"/>
        <end position="140"/>
    </location>
</feature>
<sequence>MSKRGRGGSSGAKFRISLGLPVGAVINCADNTGAKNLYIISVKGIKGRLNRLPAAGVGDMVMATVKKGKPELRKKVHPAVVIRQRKSYRRKDGVFLYFEDNAGVIVNNKGEMKGSAITGPVAKECADLWPRIASNAGSIA</sequence>
<comment type="function">
    <text evidence="1">Component of the large ribosomal subunit. The ribosome is a large ribonucleoprotein complex responsible for the synthesis of proteins in the cell.</text>
</comment>
<comment type="subunit">
    <text evidence="1">Component of the large ribosomal subunit.</text>
</comment>
<comment type="subcellular location">
    <subcellularLocation>
        <location evidence="1">Cytoplasm</location>
    </subcellularLocation>
</comment>
<comment type="similarity">
    <text evidence="2">Belongs to the universal ribosomal protein uL14 family.</text>
</comment>
<name>RL23_ICTPU</name>
<proteinExistence type="evidence at transcript level"/>